<reference key="1">
    <citation type="journal article" date="2015" name="Genome Announc.">
        <title>Genome sequence of Aspergillus flavus NRRL 3357, a strain that causes aflatoxin contamination of food and feed.</title>
        <authorList>
            <person name="Nierman W.C."/>
            <person name="Yu J."/>
            <person name="Fedorova-Abrams N.D."/>
            <person name="Losada L."/>
            <person name="Cleveland T.E."/>
            <person name="Bhatnagar D."/>
            <person name="Bennett J.W."/>
            <person name="Dean R."/>
            <person name="Payne G.A."/>
        </authorList>
    </citation>
    <scope>NUCLEOTIDE SEQUENCE [LARGE SCALE GENOMIC DNA]</scope>
    <source>
        <strain>ATCC 200026 / FGSC A1120 / IAM 13836 / NRRL 3357 / JCM 12722 / SRRC 167</strain>
    </source>
</reference>
<name>MMM1_ASPFN</name>
<dbReference type="EMBL" id="EQ963477">
    <property type="protein sequence ID" value="EED51296.1"/>
    <property type="molecule type" value="Genomic_DNA"/>
</dbReference>
<dbReference type="RefSeq" id="XP_002378303.1">
    <property type="nucleotide sequence ID" value="XM_002378262.1"/>
</dbReference>
<dbReference type="SMR" id="B8NDR8"/>
<dbReference type="STRING" id="332952.B8NDR8"/>
<dbReference type="EnsemblFungi" id="EED51296">
    <property type="protein sequence ID" value="EED51296"/>
    <property type="gene ID" value="AFLA_055590"/>
</dbReference>
<dbReference type="VEuPathDB" id="FungiDB:AFLA_004595"/>
<dbReference type="eggNOG" id="ENOG502QUUW">
    <property type="taxonomic scope" value="Eukaryota"/>
</dbReference>
<dbReference type="HOGENOM" id="CLU_032730_1_0_1"/>
<dbReference type="OMA" id="WSFTQGL"/>
<dbReference type="GO" id="GO:0005789">
    <property type="term" value="C:endoplasmic reticulum membrane"/>
    <property type="evidence" value="ECO:0007669"/>
    <property type="project" value="UniProtKB-SubCell"/>
</dbReference>
<dbReference type="GO" id="GO:0032865">
    <property type="term" value="C:ERMES complex"/>
    <property type="evidence" value="ECO:0007669"/>
    <property type="project" value="UniProtKB-UniRule"/>
</dbReference>
<dbReference type="GO" id="GO:0008289">
    <property type="term" value="F:lipid binding"/>
    <property type="evidence" value="ECO:0007669"/>
    <property type="project" value="UniProtKB-KW"/>
</dbReference>
<dbReference type="GO" id="GO:0000002">
    <property type="term" value="P:mitochondrial genome maintenance"/>
    <property type="evidence" value="ECO:0007669"/>
    <property type="project" value="UniProtKB-UniRule"/>
</dbReference>
<dbReference type="GO" id="GO:1990456">
    <property type="term" value="P:mitochondrion-endoplasmic reticulum membrane tethering"/>
    <property type="evidence" value="ECO:0007669"/>
    <property type="project" value="TreeGrafter"/>
</dbReference>
<dbReference type="GO" id="GO:0015914">
    <property type="term" value="P:phospholipid transport"/>
    <property type="evidence" value="ECO:0007669"/>
    <property type="project" value="TreeGrafter"/>
</dbReference>
<dbReference type="GO" id="GO:0045040">
    <property type="term" value="P:protein insertion into mitochondrial outer membrane"/>
    <property type="evidence" value="ECO:0007669"/>
    <property type="project" value="UniProtKB-UniRule"/>
</dbReference>
<dbReference type="CDD" id="cd21671">
    <property type="entry name" value="SMP_Mmm1"/>
    <property type="match status" value="1"/>
</dbReference>
<dbReference type="HAMAP" id="MF_03103">
    <property type="entry name" value="Mmm1"/>
    <property type="match status" value="1"/>
</dbReference>
<dbReference type="InterPro" id="IPR027537">
    <property type="entry name" value="Mmm1"/>
</dbReference>
<dbReference type="InterPro" id="IPR019411">
    <property type="entry name" value="MMM1_dom"/>
</dbReference>
<dbReference type="InterPro" id="IPR031468">
    <property type="entry name" value="SMP_LBD"/>
</dbReference>
<dbReference type="PANTHER" id="PTHR13466:SF0">
    <property type="entry name" value="SMP-LTD DOMAIN-CONTAINING PROTEIN"/>
    <property type="match status" value="1"/>
</dbReference>
<dbReference type="PANTHER" id="PTHR13466">
    <property type="entry name" value="TEX2 PROTEIN-RELATED"/>
    <property type="match status" value="1"/>
</dbReference>
<dbReference type="Pfam" id="PF10296">
    <property type="entry name" value="MMM1"/>
    <property type="match status" value="1"/>
</dbReference>
<dbReference type="PROSITE" id="PS51847">
    <property type="entry name" value="SMP"/>
    <property type="match status" value="1"/>
</dbReference>
<gene>
    <name evidence="1" type="primary">mmm1</name>
    <name type="ORF">AFLA_055590</name>
</gene>
<proteinExistence type="inferred from homology"/>
<comment type="function">
    <text evidence="1">Component of the ERMES/MDM complex, which serves as a molecular tether to connect the endoplasmic reticulum (ER) and mitochondria. Components of this complex are involved in the control of mitochondrial shape and protein biogenesis, and function in nonvesicular lipid trafficking between the ER and mitochondria. The mdm12-mmm1 subcomplex functions in the major beta-barrel assembly pathway that is responsible for biogenesis of all outer membrane beta-barrel proteins, and acts in a late step after the SAM complex. The mdm10-mdm12-mmm1 subcomplex further acts in the TOM40-specific pathway after the action of the mdm12-mmm1 complex. Essential for establishing and maintaining the structure of mitochondria and maintenance of mtDNA nucleoids.</text>
</comment>
<comment type="subunit">
    <text evidence="1">Homodimer. Component of the ER-mitochondria encounter structure (ERMES) or MDM complex, composed of mmm1, mdm10, mdm12 and mdm34. A mmm1 homodimer associates with one molecule of mdm12 on each side in a pairwise head-to-tail manner, and the SMP-LTD domains of mmm1 and mdm12 generate a continuous hydrophobic tunnel for phospholipid trafficking.</text>
</comment>
<comment type="subcellular location">
    <subcellularLocation>
        <location evidence="1">Endoplasmic reticulum membrane</location>
        <topology evidence="1">Single-pass type I membrane protein</topology>
    </subcellularLocation>
    <text evidence="1">The ERMES/MDM complex localizes to a few discrete foci (around 10 per single cell), that represent mitochondria-endoplasmic reticulum junctions. These foci are often found next to mtDNA nucleoids.</text>
</comment>
<comment type="domain">
    <text evidence="1">The SMP-LTD domain is a barrel-like domain that can bind various types of glycerophospholipids in its interior and mediate their transfer between two adjacent bilayers.</text>
</comment>
<comment type="similarity">
    <text evidence="1">Belongs to the MMM1 family.</text>
</comment>
<keyword id="KW-0256">Endoplasmic reticulum</keyword>
<keyword id="KW-0445">Lipid transport</keyword>
<keyword id="KW-0446">Lipid-binding</keyword>
<keyword id="KW-0472">Membrane</keyword>
<keyword id="KW-0812">Transmembrane</keyword>
<keyword id="KW-1133">Transmembrane helix</keyword>
<keyword id="KW-0813">Transport</keyword>
<evidence type="ECO:0000255" key="1">
    <source>
        <dbReference type="HAMAP-Rule" id="MF_03103"/>
    </source>
</evidence>
<evidence type="ECO:0000256" key="2">
    <source>
        <dbReference type="SAM" id="MobiDB-lite"/>
    </source>
</evidence>
<feature type="chain" id="PRO_0000384213" description="Maintenance of mitochondrial morphology protein 1">
    <location>
        <begin position="1"/>
        <end position="491"/>
    </location>
</feature>
<feature type="topological domain" description="Lumenal" evidence="1">
    <location>
        <begin position="1"/>
        <end position="22"/>
    </location>
</feature>
<feature type="transmembrane region" description="Helical" evidence="1">
    <location>
        <begin position="23"/>
        <end position="43"/>
    </location>
</feature>
<feature type="topological domain" description="Cytoplasmic" evidence="1">
    <location>
        <begin position="44"/>
        <end position="491"/>
    </location>
</feature>
<feature type="domain" description="SMP-LTD" evidence="1">
    <location>
        <begin position="131"/>
        <end position="384"/>
    </location>
</feature>
<feature type="region of interest" description="Disordered" evidence="2">
    <location>
        <begin position="50"/>
        <end position="95"/>
    </location>
</feature>
<feature type="region of interest" description="Disordered" evidence="2">
    <location>
        <begin position="275"/>
        <end position="325"/>
    </location>
</feature>
<feature type="region of interest" description="Disordered" evidence="2">
    <location>
        <begin position="392"/>
        <end position="491"/>
    </location>
</feature>
<feature type="compositionally biased region" description="Basic residues" evidence="2">
    <location>
        <begin position="54"/>
        <end position="64"/>
    </location>
</feature>
<feature type="compositionally biased region" description="Polar residues" evidence="2">
    <location>
        <begin position="65"/>
        <end position="78"/>
    </location>
</feature>
<feature type="compositionally biased region" description="Polar residues" evidence="2">
    <location>
        <begin position="85"/>
        <end position="95"/>
    </location>
</feature>
<feature type="compositionally biased region" description="Pro residues" evidence="2">
    <location>
        <begin position="275"/>
        <end position="287"/>
    </location>
</feature>
<feature type="compositionally biased region" description="Polar residues" evidence="2">
    <location>
        <begin position="300"/>
        <end position="315"/>
    </location>
</feature>
<feature type="compositionally biased region" description="Polar residues" evidence="2">
    <location>
        <begin position="403"/>
        <end position="412"/>
    </location>
</feature>
<feature type="compositionally biased region" description="Basic and acidic residues" evidence="2">
    <location>
        <begin position="422"/>
        <end position="434"/>
    </location>
</feature>
<organism>
    <name type="scientific">Aspergillus flavus (strain ATCC 200026 / FGSC A1120 / IAM 13836 / NRRL 3357 / JCM 12722 / SRRC 167)</name>
    <dbReference type="NCBI Taxonomy" id="332952"/>
    <lineage>
        <taxon>Eukaryota</taxon>
        <taxon>Fungi</taxon>
        <taxon>Dikarya</taxon>
        <taxon>Ascomycota</taxon>
        <taxon>Pezizomycotina</taxon>
        <taxon>Eurotiomycetes</taxon>
        <taxon>Eurotiomycetidae</taxon>
        <taxon>Eurotiales</taxon>
        <taxon>Aspergillaceae</taxon>
        <taxon>Aspergillus</taxon>
        <taxon>Aspergillus subgen. Circumdati</taxon>
    </lineage>
</organism>
<accession>B8NDR8</accession>
<sequence>MTFQQNEPSAVPAQSSLSFTQGFLLGQLSVVLLIGAFIKFFIFGEAPPPPSRGLSHRASTHRRSNSIYTINPNEGTSRSLREKPSTSNVLRPVPSSATNTRSILRKTYYSAIPTNPSGKHGRHRIHHSSHQPESLDWFNVLIAQTIAQYRQTAYLLKDDPTSSILSSLTAALNNPEKKPSFIDKIAVTDISLGEEFPIFSNCRIIAVDDPNSDGGRLQALLDVDLSDDNLSIAVETSLLLNYPKPCSAILPVALSISIVRFSGTLCISLVPASTPPLHTPSPSPSPPTADGAVNAGIHPTNGSREPTQEAPNAQEESPPKTSPKSNVAFSFLPDYRLDLSVRSLIGSRSRLQDVPKVAQLVEARVHSWFEERVVEPRVQVVGLPDLWPRMGRTGVRTGEDSETGSNAASRSAMSADMGNSLRADDIGREPDGLRFRGLGARPPFDSVSRTSSFNVETGGFRSHSMTREGSGGGMSDDFHMPGTLPGGAAAN</sequence>
<protein>
    <recommendedName>
        <fullName evidence="1">Maintenance of mitochondrial morphology protein 1</fullName>
    </recommendedName>
</protein>